<dbReference type="GO" id="GO:0005576">
    <property type="term" value="C:extracellular region"/>
    <property type="evidence" value="ECO:0007669"/>
    <property type="project" value="UniProtKB-SubCell"/>
</dbReference>
<dbReference type="GO" id="GO:0015459">
    <property type="term" value="F:potassium channel regulator activity"/>
    <property type="evidence" value="ECO:0007669"/>
    <property type="project" value="UniProtKB-KW"/>
</dbReference>
<dbReference type="GO" id="GO:0090729">
    <property type="term" value="F:toxin activity"/>
    <property type="evidence" value="ECO:0007669"/>
    <property type="project" value="UniProtKB-KW"/>
</dbReference>
<dbReference type="InterPro" id="IPR012630">
    <property type="entry name" value="Toxin_25"/>
</dbReference>
<dbReference type="Pfam" id="PF08095">
    <property type="entry name" value="Toxin_25"/>
    <property type="match status" value="1"/>
</dbReference>
<name>KKX13_HETSP</name>
<sequence>GFGCYRSCWKAGHDEETCKKECS</sequence>
<protein>
    <recommendedName>
        <fullName evidence="4">Potassium channel toxin kappa-KTx 1.3</fullName>
    </recommendedName>
    <alternativeName>
        <fullName evidence="5">Kappa-hefutoxin 3</fullName>
    </alternativeName>
</protein>
<accession>P83655</accession>
<evidence type="ECO:0000250" key="1">
    <source>
        <dbReference type="UniProtKB" id="P82851"/>
    </source>
</evidence>
<evidence type="ECO:0000269" key="2">
    <source>
    </source>
</evidence>
<evidence type="ECO:0000269" key="3">
    <source>
    </source>
</evidence>
<evidence type="ECO:0000303" key="4">
    <source>
    </source>
</evidence>
<evidence type="ECO:0000303" key="5">
    <source>
    </source>
</evidence>
<evidence type="ECO:0000305" key="6"/>
<evidence type="ECO:0000305" key="7">
    <source>
    </source>
</evidence>
<reference key="1">
    <citation type="journal article" date="2005" name="Biochem. Pharmacol.">
        <title>Assignment of voltage-gated potassium channel blocking activity to kappa-KTx1.3, a non-toxic homologue of kappa-hefutoxin-1, from Heterometrus spinifer venom.</title>
        <authorList>
            <person name="Nirthanan S."/>
            <person name="Pil J."/>
            <person name="Abdel-Mottaleb Y."/>
            <person name="Sugahara Y."/>
            <person name="Gopalakrishnakone P."/>
            <person name="Joseph J.S."/>
            <person name="Sato K."/>
            <person name="Tytgat J."/>
        </authorList>
    </citation>
    <scope>PROTEIN SEQUENCE</scope>
    <scope>SUBUNIT</scope>
    <scope>SUBCELLULAR LOCATION</scope>
    <scope>DISULFIDE BOND</scope>
    <scope>MUTAGENESIS OF LYS-20</scope>
    <scope>MASS SPECTROMETRY</scope>
    <scope>SYNTHESIS</scope>
    <scope>3D-STRUCTURE MODELING</scope>
    <source>
        <tissue>Venom</tissue>
    </source>
</reference>
<reference key="2">
    <citation type="journal article" date="2017" name="Peptides">
        <title>Expanding the pharmacological profile of kappa-hefutoxin 1 and analogues: A focus on the inhibitory effect on the oncogenic channel Kv10.1.</title>
        <authorList>
            <person name="Moreels L."/>
            <person name="Peigneur S."/>
            <person name="Yamaguchi Y."/>
            <person name="Vriens K."/>
            <person name="Waelkens E."/>
            <person name="Zhu S."/>
            <person name="Thevissen K."/>
            <person name="Cammue B.P.A."/>
            <person name="Sato K."/>
            <person name="Tytgat J."/>
        </authorList>
    </citation>
    <scope>FUNCTION</scope>
</reference>
<feature type="peptide" id="PRO_0000044546" description="Potassium channel toxin kappa-KTx 1.3" evidence="2">
    <location>
        <begin position="1"/>
        <end position="23"/>
    </location>
</feature>
<feature type="site" description="Aromatic residue of the functional dyad" evidence="1">
    <location>
        <position position="5"/>
    </location>
</feature>
<feature type="site" description="Basic residue of the functional dyad" evidence="1">
    <location>
        <position position="19"/>
    </location>
</feature>
<feature type="disulfide bond" evidence="2">
    <location>
        <begin position="4"/>
        <end position="22"/>
    </location>
</feature>
<feature type="disulfide bond" evidence="2">
    <location>
        <begin position="8"/>
        <end position="18"/>
    </location>
</feature>
<feature type="mutagenesis site" description="Blocks both Kv1.2/KCNA2 (IC(50)=36.9 uM) and Kv1.3/KCNA3 (IC(50)=115.7 uM) but also Kv1.1/KCNA1 (IC(50)=110.7 uM)." evidence="2">
    <original>K</original>
    <variation>A</variation>
    <location>
        <position position="20"/>
    </location>
</feature>
<feature type="mutagenesis site" description="Blocks Kv1.2/KCNA2 (IC(50)=36.8 uM) and Kv1.3/KCNA3 (IC(50)=53.7 uM), but not Kv1.1/KCNA1." evidence="2">
    <original>K</original>
    <variation>E</variation>
    <location>
        <position position="20"/>
    </location>
</feature>
<feature type="mutagenesis site" description="Does not block any channel subtype tested." evidence="2">
    <original>K</original>
    <variation>R</variation>
    <location>
        <position position="20"/>
    </location>
</feature>
<organism>
    <name type="scientific">Heterometrus spinifer</name>
    <name type="common">Asia giant forest scorpion</name>
    <name type="synonym">Malaysian black scorpion</name>
    <dbReference type="NCBI Taxonomy" id="118530"/>
    <lineage>
        <taxon>Eukaryota</taxon>
        <taxon>Metazoa</taxon>
        <taxon>Ecdysozoa</taxon>
        <taxon>Arthropoda</taxon>
        <taxon>Chelicerata</taxon>
        <taxon>Arachnida</taxon>
        <taxon>Scorpiones</taxon>
        <taxon>Iurida</taxon>
        <taxon>Scorpionoidea</taxon>
        <taxon>Scorpionidae</taxon>
        <taxon>Heterometrinae</taxon>
        <taxon>Heterometrus</taxon>
    </lineage>
</organism>
<proteinExistence type="evidence at protein level"/>
<comment type="function">
    <text evidence="2 3">Shows very weak blocking activity on voltage-gated potassium channels Kv10.1/KCNH1/EAG1 (6.2% inhibition by 40 uM of the toxin) (PubMed:27578329). Has no effect on the other voltage-gated potassium channels tested (PubMed:15670585).</text>
</comment>
<comment type="subunit">
    <text evidence="2">Monomer.</text>
</comment>
<comment type="subcellular location">
    <subcellularLocation>
        <location evidence="2">Secreted</location>
    </subcellularLocation>
</comment>
<comment type="tissue specificity">
    <text evidence="7">Expressed by the venom gland.</text>
</comment>
<comment type="domain">
    <text evidence="1">Has the structural arrangement of two alpha-helices stabilized by disulfide bonds (CSalpha/alpha 2(S-S)).</text>
</comment>
<comment type="PTM">
    <text evidence="2">Is not amidated.</text>
</comment>
<comment type="mass spectrometry"/>
<comment type="miscellaneous">
    <text evidence="2">Negative results: has no effect on Kv1.1/KCNA1, Kv1.2/KCNA2 and Kv1.3/KCNA3 potassium channels, suggesting that the presence of an additional charged residue in a position adjacent to the dyad lysine impedes the functional block of Kv1 channels produced by this toxin.</text>
</comment>
<comment type="similarity">
    <text evidence="6">Belongs to the short scorpion toxin superfamily. Potassium channel inhibitor kappa-KTx family. Kappa-KTx 1 subfamily.</text>
</comment>
<keyword id="KW-0903">Direct protein sequencing</keyword>
<keyword id="KW-1015">Disulfide bond</keyword>
<keyword id="KW-0872">Ion channel impairing toxin</keyword>
<keyword id="KW-0632">Potassium channel impairing toxin</keyword>
<keyword id="KW-0964">Secreted</keyword>
<keyword id="KW-0800">Toxin</keyword>
<keyword id="KW-1220">Voltage-gated potassium channel impairing toxin</keyword>